<keyword id="KW-0175">Coiled coil</keyword>
<keyword id="KW-0238">DNA-binding</keyword>
<keyword id="KW-0539">Nucleus</keyword>
<keyword id="KW-1185">Reference proteome</keyword>
<keyword id="KW-0804">Transcription</keyword>
<keyword id="KW-0805">Transcription regulation</keyword>
<dbReference type="EMBL" id="AC074360">
    <property type="protein sequence ID" value="AAG60141.1"/>
    <property type="molecule type" value="Genomic_DNA"/>
</dbReference>
<dbReference type="EMBL" id="CP002684">
    <property type="protein sequence ID" value="AEE31378.1"/>
    <property type="molecule type" value="Genomic_DNA"/>
</dbReference>
<dbReference type="EMBL" id="DQ056473">
    <property type="protein sequence ID" value="AAY78630.1"/>
    <property type="molecule type" value="mRNA"/>
</dbReference>
<dbReference type="RefSeq" id="NP_174444.1">
    <property type="nucleotide sequence ID" value="NM_102898.1"/>
</dbReference>
<dbReference type="SMR" id="Q9C6V3"/>
<dbReference type="BioGRID" id="25285">
    <property type="interactions" value="24"/>
</dbReference>
<dbReference type="FunCoup" id="Q9C6V3">
    <property type="interactions" value="18"/>
</dbReference>
<dbReference type="IntAct" id="Q9C6V3">
    <property type="interactions" value="26"/>
</dbReference>
<dbReference type="STRING" id="3702.Q9C6V3"/>
<dbReference type="PaxDb" id="3702-AT1G31630.1"/>
<dbReference type="EnsemblPlants" id="AT1G31630.1">
    <property type="protein sequence ID" value="AT1G31630.1"/>
    <property type="gene ID" value="AT1G31630"/>
</dbReference>
<dbReference type="GeneID" id="840050"/>
<dbReference type="Gramene" id="AT1G31630.1">
    <property type="protein sequence ID" value="AT1G31630.1"/>
    <property type="gene ID" value="AT1G31630"/>
</dbReference>
<dbReference type="KEGG" id="ath:AT1G31630"/>
<dbReference type="Araport" id="AT1G31630"/>
<dbReference type="TAIR" id="AT1G31630">
    <property type="gene designation" value="AGL86"/>
</dbReference>
<dbReference type="eggNOG" id="KOG0014">
    <property type="taxonomic scope" value="Eukaryota"/>
</dbReference>
<dbReference type="HOGENOM" id="CLU_053053_7_1_1"/>
<dbReference type="InParanoid" id="Q9C6V3"/>
<dbReference type="OMA" id="MEMLMEY"/>
<dbReference type="PhylomeDB" id="Q9C6V3"/>
<dbReference type="PRO" id="PR:Q9C6V3"/>
<dbReference type="Proteomes" id="UP000006548">
    <property type="component" value="Chromosome 1"/>
</dbReference>
<dbReference type="ExpressionAtlas" id="Q9C6V3">
    <property type="expression patterns" value="baseline and differential"/>
</dbReference>
<dbReference type="GO" id="GO:0005634">
    <property type="term" value="C:nucleus"/>
    <property type="evidence" value="ECO:0007669"/>
    <property type="project" value="UniProtKB-SubCell"/>
</dbReference>
<dbReference type="GO" id="GO:0000987">
    <property type="term" value="F:cis-regulatory region sequence-specific DNA binding"/>
    <property type="evidence" value="ECO:0007669"/>
    <property type="project" value="InterPro"/>
</dbReference>
<dbReference type="GO" id="GO:0003700">
    <property type="term" value="F:DNA-binding transcription factor activity"/>
    <property type="evidence" value="ECO:0000250"/>
    <property type="project" value="TAIR"/>
</dbReference>
<dbReference type="GO" id="GO:0000981">
    <property type="term" value="F:DNA-binding transcription factor activity, RNA polymerase II-specific"/>
    <property type="evidence" value="ECO:0007669"/>
    <property type="project" value="InterPro"/>
</dbReference>
<dbReference type="GO" id="GO:0046983">
    <property type="term" value="F:protein dimerization activity"/>
    <property type="evidence" value="ECO:0007669"/>
    <property type="project" value="InterPro"/>
</dbReference>
<dbReference type="GO" id="GO:0045944">
    <property type="term" value="P:positive regulation of transcription by RNA polymerase II"/>
    <property type="evidence" value="ECO:0007669"/>
    <property type="project" value="InterPro"/>
</dbReference>
<dbReference type="CDD" id="cd00266">
    <property type="entry name" value="MADS_SRF_like"/>
    <property type="match status" value="1"/>
</dbReference>
<dbReference type="FunFam" id="3.40.1810.10:FF:000046">
    <property type="entry name" value="Agamous-like MADS-box protein AGL92"/>
    <property type="match status" value="1"/>
</dbReference>
<dbReference type="Gene3D" id="3.40.1810.10">
    <property type="entry name" value="Transcription factor, MADS-box"/>
    <property type="match status" value="1"/>
</dbReference>
<dbReference type="InterPro" id="IPR050142">
    <property type="entry name" value="MADS-box/MEF2_TF"/>
</dbReference>
<dbReference type="InterPro" id="IPR033897">
    <property type="entry name" value="SRF-like_MADS-box"/>
</dbReference>
<dbReference type="InterPro" id="IPR002100">
    <property type="entry name" value="TF_MADSbox"/>
</dbReference>
<dbReference type="InterPro" id="IPR036879">
    <property type="entry name" value="TF_MADSbox_sf"/>
</dbReference>
<dbReference type="PANTHER" id="PTHR48019">
    <property type="entry name" value="SERUM RESPONSE FACTOR HOMOLOG"/>
    <property type="match status" value="1"/>
</dbReference>
<dbReference type="Pfam" id="PF00319">
    <property type="entry name" value="SRF-TF"/>
    <property type="match status" value="1"/>
</dbReference>
<dbReference type="PRINTS" id="PR00404">
    <property type="entry name" value="MADSDOMAIN"/>
</dbReference>
<dbReference type="SMART" id="SM00432">
    <property type="entry name" value="MADS"/>
    <property type="match status" value="1"/>
</dbReference>
<dbReference type="SUPFAM" id="SSF55455">
    <property type="entry name" value="SRF-like"/>
    <property type="match status" value="1"/>
</dbReference>
<dbReference type="PROSITE" id="PS50066">
    <property type="entry name" value="MADS_BOX_2"/>
    <property type="match status" value="1"/>
</dbReference>
<name>AGL86_ARATH</name>
<organism>
    <name type="scientific">Arabidopsis thaliana</name>
    <name type="common">Mouse-ear cress</name>
    <dbReference type="NCBI Taxonomy" id="3702"/>
    <lineage>
        <taxon>Eukaryota</taxon>
        <taxon>Viridiplantae</taxon>
        <taxon>Streptophyta</taxon>
        <taxon>Embryophyta</taxon>
        <taxon>Tracheophyta</taxon>
        <taxon>Spermatophyta</taxon>
        <taxon>Magnoliopsida</taxon>
        <taxon>eudicotyledons</taxon>
        <taxon>Gunneridae</taxon>
        <taxon>Pentapetalae</taxon>
        <taxon>rosids</taxon>
        <taxon>malvids</taxon>
        <taxon>Brassicales</taxon>
        <taxon>Brassicaceae</taxon>
        <taxon>Camelineae</taxon>
        <taxon>Arabidopsis</taxon>
    </lineage>
</organism>
<feature type="chain" id="PRO_0000363652" description="Agamous-like MADS-box protein AGL86">
    <location>
        <begin position="1"/>
        <end position="339"/>
    </location>
</feature>
<feature type="domain" description="MADS-box" evidence="2">
    <location>
        <begin position="1"/>
        <end position="60"/>
    </location>
</feature>
<feature type="coiled-coil region" evidence="1">
    <location>
        <begin position="86"/>
        <end position="112"/>
    </location>
</feature>
<evidence type="ECO:0000255" key="1"/>
<evidence type="ECO:0000255" key="2">
    <source>
        <dbReference type="PROSITE-ProRule" id="PRU00251"/>
    </source>
</evidence>
<evidence type="ECO:0000269" key="3">
    <source>
    </source>
</evidence>
<evidence type="ECO:0000269" key="4">
    <source>
    </source>
</evidence>
<accession>Q9C6V3</accession>
<protein>
    <recommendedName>
        <fullName>Agamous-like MADS-box protein AGL86</fullName>
    </recommendedName>
</protein>
<gene>
    <name type="primary">AGL86</name>
    <name type="ordered locus">At1g31630</name>
    <name type="ORF">F27M3.17</name>
</gene>
<sequence>MRSKIKLSLIANKTSRRTTFRKRKGGITNKLHELTTLCGVKACAVISSPYENPVVWPSTEGVQEAVSMFMERPATEQSKLMMSHETYLQDKITKETKKLESLRRENRESQLRQFMFDCVEGKMSEHQYGARDLQDLSLYIDHYINQLNSSVMLLTNNGASSSSFPPPLHTSVAGAGAGAGAAPLVVAGAGAAPLAVAGAGASPLAVAGVGAAPLAVAGAGPPMAQNQYEPIQPYIPTAFSDNIQYQAPVDFNHQIQHGIYDNLSLDPNHQYPFQDDPFMEMLMEYPYEQVGYAAEHAHIPFMNGNYYNYHQPPTVGLTTTGHMPSNNATTTTTTNTTVV</sequence>
<reference key="1">
    <citation type="journal article" date="2000" name="Nature">
        <title>Sequence and analysis of chromosome 1 of the plant Arabidopsis thaliana.</title>
        <authorList>
            <person name="Theologis A."/>
            <person name="Ecker J.R."/>
            <person name="Palm C.J."/>
            <person name="Federspiel N.A."/>
            <person name="Kaul S."/>
            <person name="White O."/>
            <person name="Alonso J."/>
            <person name="Altafi H."/>
            <person name="Araujo R."/>
            <person name="Bowman C.L."/>
            <person name="Brooks S.Y."/>
            <person name="Buehler E."/>
            <person name="Chan A."/>
            <person name="Chao Q."/>
            <person name="Chen H."/>
            <person name="Cheuk R.F."/>
            <person name="Chin C.W."/>
            <person name="Chung M.K."/>
            <person name="Conn L."/>
            <person name="Conway A.B."/>
            <person name="Conway A.R."/>
            <person name="Creasy T.H."/>
            <person name="Dewar K."/>
            <person name="Dunn P."/>
            <person name="Etgu P."/>
            <person name="Feldblyum T.V."/>
            <person name="Feng J.-D."/>
            <person name="Fong B."/>
            <person name="Fujii C.Y."/>
            <person name="Gill J.E."/>
            <person name="Goldsmith A.D."/>
            <person name="Haas B."/>
            <person name="Hansen N.F."/>
            <person name="Hughes B."/>
            <person name="Huizar L."/>
            <person name="Hunter J.L."/>
            <person name="Jenkins J."/>
            <person name="Johnson-Hopson C."/>
            <person name="Khan S."/>
            <person name="Khaykin E."/>
            <person name="Kim C.J."/>
            <person name="Koo H.L."/>
            <person name="Kremenetskaia I."/>
            <person name="Kurtz D.B."/>
            <person name="Kwan A."/>
            <person name="Lam B."/>
            <person name="Langin-Hooper S."/>
            <person name="Lee A."/>
            <person name="Lee J.M."/>
            <person name="Lenz C.A."/>
            <person name="Li J.H."/>
            <person name="Li Y.-P."/>
            <person name="Lin X."/>
            <person name="Liu S.X."/>
            <person name="Liu Z.A."/>
            <person name="Luros J.S."/>
            <person name="Maiti R."/>
            <person name="Marziali A."/>
            <person name="Militscher J."/>
            <person name="Miranda M."/>
            <person name="Nguyen M."/>
            <person name="Nierman W.C."/>
            <person name="Osborne B.I."/>
            <person name="Pai G."/>
            <person name="Peterson J."/>
            <person name="Pham P.K."/>
            <person name="Rizzo M."/>
            <person name="Rooney T."/>
            <person name="Rowley D."/>
            <person name="Sakano H."/>
            <person name="Salzberg S.L."/>
            <person name="Schwartz J.R."/>
            <person name="Shinn P."/>
            <person name="Southwick A.M."/>
            <person name="Sun H."/>
            <person name="Tallon L.J."/>
            <person name="Tambunga G."/>
            <person name="Toriumi M.J."/>
            <person name="Town C.D."/>
            <person name="Utterback T."/>
            <person name="Van Aken S."/>
            <person name="Vaysberg M."/>
            <person name="Vysotskaia V.S."/>
            <person name="Walker M."/>
            <person name="Wu D."/>
            <person name="Yu G."/>
            <person name="Fraser C.M."/>
            <person name="Venter J.C."/>
            <person name="Davis R.W."/>
        </authorList>
    </citation>
    <scope>NUCLEOTIDE SEQUENCE [LARGE SCALE GENOMIC DNA]</scope>
    <source>
        <strain>cv. Columbia</strain>
    </source>
</reference>
<reference key="2">
    <citation type="journal article" date="2017" name="Plant J.">
        <title>Araport11: a complete reannotation of the Arabidopsis thaliana reference genome.</title>
        <authorList>
            <person name="Cheng C.Y."/>
            <person name="Krishnakumar V."/>
            <person name="Chan A.P."/>
            <person name="Thibaud-Nissen F."/>
            <person name="Schobel S."/>
            <person name="Town C.D."/>
        </authorList>
    </citation>
    <scope>GENOME REANNOTATION</scope>
    <source>
        <strain>cv. Columbia</strain>
    </source>
</reference>
<reference key="3">
    <citation type="submission" date="2005-05" db="EMBL/GenBank/DDBJ databases">
        <authorList>
            <person name="Underwood B.A."/>
            <person name="Xiao Y.-L."/>
            <person name="Moskal W.A. Jr."/>
            <person name="Monaghan E.L."/>
            <person name="Wang W."/>
            <person name="Redman J.C."/>
            <person name="Wu H.C."/>
            <person name="Utterback T."/>
            <person name="Town C.D."/>
        </authorList>
    </citation>
    <scope>NUCLEOTIDE SEQUENCE [LARGE SCALE MRNA]</scope>
    <source>
        <strain>cv. Columbia</strain>
    </source>
</reference>
<reference key="4">
    <citation type="journal article" date="2005" name="Plant Cell">
        <title>Comprehensive interaction map of the Arabidopsis MADS Box transcription factors.</title>
        <authorList>
            <person name="de Folter S."/>
            <person name="Immink R.G.H."/>
            <person name="Kieffer M."/>
            <person name="Parenicova L."/>
            <person name="Henz S.R."/>
            <person name="Weigel D."/>
            <person name="Busscher M."/>
            <person name="Kooiker M."/>
            <person name="Colombo L."/>
            <person name="Kater M.M."/>
            <person name="Davies B."/>
            <person name="Angenent G.C."/>
        </authorList>
    </citation>
    <scope>INTERACTION WITH AGL62</scope>
</reference>
<reference key="5">
    <citation type="journal article" date="2008" name="Plant Cell">
        <title>The MADS domain protein DIANA acts together with AGAMOUS-LIKE80 to specify the central cell in Arabidopsis ovules.</title>
        <authorList>
            <person name="Bemer M."/>
            <person name="Wolters-Arts M."/>
            <person name="Grossniklaus U."/>
            <person name="Angenent G.C."/>
        </authorList>
    </citation>
    <scope>INTERACTION WITH AGL61</scope>
</reference>
<proteinExistence type="evidence at protein level"/>
<comment type="function">
    <text>Probable transcription factor.</text>
</comment>
<comment type="subunit">
    <text evidence="3 4">Interacts with AGL61/DIANA and AGL62.</text>
</comment>
<comment type="interaction">
    <interactant intactId="EBI-622448">
        <id>Q9C6V3</id>
    </interactant>
    <interactant intactId="EBI-15195499">
        <id>Q9M128</id>
        <label>BHLH57</label>
    </interactant>
    <organismsDiffer>false</organismsDiffer>
    <experiments>3</experiments>
</comment>
<comment type="subcellular location">
    <subcellularLocation>
        <location evidence="2">Nucleus</location>
    </subcellularLocation>
</comment>